<sequence length="224" mass="25949">MKSRNREMFKVGPIGSKQYYDKSWEEKGRNMISSIYVAFNKDSIKCIQFSYFHNGVHVVSEKHGSSKGQSYEIVRLNDDEYVTGLSGIFWERKVTSLTFHTNQGKHGPFCNGTGYSSSYMADYKKEIDVKIRDRREFGGFFGSFDDEFDGLTSIGIYVYPTYDNKPTLNQAWDPLYAFAHNQIPTIADGIPVMHIRYKPKLKDRIFSKLDFKRAMLCLIKVFLD</sequence>
<organism>
    <name type="scientific">Arabidopsis thaliana</name>
    <name type="common">Mouse-ear cress</name>
    <dbReference type="NCBI Taxonomy" id="3702"/>
    <lineage>
        <taxon>Eukaryota</taxon>
        <taxon>Viridiplantae</taxon>
        <taxon>Streptophyta</taxon>
        <taxon>Embryophyta</taxon>
        <taxon>Tracheophyta</taxon>
        <taxon>Spermatophyta</taxon>
        <taxon>Magnoliopsida</taxon>
        <taxon>eudicotyledons</taxon>
        <taxon>Gunneridae</taxon>
        <taxon>Pentapetalae</taxon>
        <taxon>rosids</taxon>
        <taxon>malvids</taxon>
        <taxon>Brassicales</taxon>
        <taxon>Brassicaceae</taxon>
        <taxon>Camelineae</taxon>
        <taxon>Arabidopsis</taxon>
    </lineage>
</organism>
<reference key="1">
    <citation type="journal article" date="1999" name="Nature">
        <title>Sequence and analysis of chromosome 2 of the plant Arabidopsis thaliana.</title>
        <authorList>
            <person name="Lin X."/>
            <person name="Kaul S."/>
            <person name="Rounsley S.D."/>
            <person name="Shea T.P."/>
            <person name="Benito M.-I."/>
            <person name="Town C.D."/>
            <person name="Fujii C.Y."/>
            <person name="Mason T.M."/>
            <person name="Bowman C.L."/>
            <person name="Barnstead M.E."/>
            <person name="Feldblyum T.V."/>
            <person name="Buell C.R."/>
            <person name="Ketchum K.A."/>
            <person name="Lee J.J."/>
            <person name="Ronning C.M."/>
            <person name="Koo H.L."/>
            <person name="Moffat K.S."/>
            <person name="Cronin L.A."/>
            <person name="Shen M."/>
            <person name="Pai G."/>
            <person name="Van Aken S."/>
            <person name="Umayam L."/>
            <person name="Tallon L.J."/>
            <person name="Gill J.E."/>
            <person name="Adams M.D."/>
            <person name="Carrera A.J."/>
            <person name="Creasy T.H."/>
            <person name="Goodman H.M."/>
            <person name="Somerville C.R."/>
            <person name="Copenhaver G.P."/>
            <person name="Preuss D."/>
            <person name="Nierman W.C."/>
            <person name="White O."/>
            <person name="Eisen J.A."/>
            <person name="Salzberg S.L."/>
            <person name="Fraser C.M."/>
            <person name="Venter J.C."/>
        </authorList>
    </citation>
    <scope>NUCLEOTIDE SEQUENCE [LARGE SCALE GENOMIC DNA]</scope>
    <source>
        <strain>cv. Columbia</strain>
    </source>
</reference>
<reference key="2">
    <citation type="journal article" date="2017" name="Plant J.">
        <title>Araport11: a complete reannotation of the Arabidopsis thaliana reference genome.</title>
        <authorList>
            <person name="Cheng C.Y."/>
            <person name="Krishnakumar V."/>
            <person name="Chan A.P."/>
            <person name="Thibaud-Nissen F."/>
            <person name="Schobel S."/>
            <person name="Town C.D."/>
        </authorList>
    </citation>
    <scope>GENOME REANNOTATION</scope>
    <source>
        <strain>cv. Columbia</strain>
    </source>
</reference>
<reference key="3">
    <citation type="journal article" date="2002" name="Plant Physiol.">
        <title>Cloning and sequencing of cDNAs for hypothetical genes from chromosome 2 of Arabidopsis.</title>
        <authorList>
            <person name="Xiao Y.-L."/>
            <person name="Malik M."/>
            <person name="Whitelaw C.A."/>
            <person name="Town C.D."/>
        </authorList>
    </citation>
    <scope>NUCLEOTIDE SEQUENCE [LARGE SCALE MRNA]</scope>
    <source>
        <strain>cv. Columbia</strain>
    </source>
</reference>
<reference key="4">
    <citation type="journal article" date="2008" name="Plant Cell Physiol.">
        <title>Antagonistic jacalin-related lectins regulate the size of ER body-type beta-glucosidase complexes in Arabidopsis thaliana.</title>
        <authorList>
            <person name="Nagano A.J."/>
            <person name="Fukao Y."/>
            <person name="Fujiwara M."/>
            <person name="Nishimura M."/>
            <person name="Hara-Nishimura I."/>
        </authorList>
    </citation>
    <scope>GENE FAMILY</scope>
    <scope>NOMENCLATURE</scope>
</reference>
<name>JAL24_ARATH</name>
<accession>Q84X07</accession>
<accession>F4IS35</accession>
<accession>O22830</accession>
<feature type="chain" id="PRO_0000430388" description="Jacalin-related lectin 24">
    <location>
        <begin position="1"/>
        <end position="224"/>
    </location>
</feature>
<feature type="domain" description="Jacalin-type lectin" evidence="1">
    <location>
        <begin position="8"/>
        <end position="160"/>
    </location>
</feature>
<keyword id="KW-0430">Lectin</keyword>
<keyword id="KW-1185">Reference proteome</keyword>
<evidence type="ECO:0000255" key="1">
    <source>
        <dbReference type="PROSITE-ProRule" id="PRU01088"/>
    </source>
</evidence>
<evidence type="ECO:0000305" key="2"/>
<proteinExistence type="evidence at transcript level"/>
<protein>
    <recommendedName>
        <fullName>Jacalin-related lectin 24</fullName>
    </recommendedName>
</protein>
<comment type="similarity">
    <text evidence="1 2">Belongs to the jacalin lectin family.</text>
</comment>
<comment type="sequence caution" evidence="2">
    <conflict type="erroneous gene model prediction">
        <sequence resource="EMBL-CDS" id="AAB64033"/>
    </conflict>
</comment>
<dbReference type="EMBL" id="AC002333">
    <property type="protein sequence ID" value="AAB64033.1"/>
    <property type="status" value="ALT_SEQ"/>
    <property type="molecule type" value="Genomic_DNA"/>
</dbReference>
<dbReference type="EMBL" id="CP002685">
    <property type="protein sequence ID" value="AEC10313.1"/>
    <property type="molecule type" value="Genomic_DNA"/>
</dbReference>
<dbReference type="EMBL" id="AY219102">
    <property type="protein sequence ID" value="AAO37189.1"/>
    <property type="molecule type" value="mRNA"/>
</dbReference>
<dbReference type="PIR" id="G84869">
    <property type="entry name" value="G84869"/>
</dbReference>
<dbReference type="RefSeq" id="NP_181901.2">
    <property type="nucleotide sequence ID" value="NM_129935.2"/>
</dbReference>
<dbReference type="SMR" id="Q84X07"/>
<dbReference type="FunCoup" id="Q84X07">
    <property type="interactions" value="4"/>
</dbReference>
<dbReference type="iPTMnet" id="Q84X07"/>
<dbReference type="PaxDb" id="3702-AT2G43730.1"/>
<dbReference type="EnsemblPlants" id="AT2G43730.1">
    <property type="protein sequence ID" value="AT2G43730.1"/>
    <property type="gene ID" value="AT2G43730"/>
</dbReference>
<dbReference type="GeneID" id="818975"/>
<dbReference type="Gramene" id="AT2G43730.1">
    <property type="protein sequence ID" value="AT2G43730.1"/>
    <property type="gene ID" value="AT2G43730"/>
</dbReference>
<dbReference type="KEGG" id="ath:AT2G43730"/>
<dbReference type="Araport" id="AT2G43730"/>
<dbReference type="TAIR" id="AT2G43730"/>
<dbReference type="HOGENOM" id="CLU_076205_0_0_1"/>
<dbReference type="InParanoid" id="Q84X07"/>
<dbReference type="OMA" id="KRTCEPE"/>
<dbReference type="PRO" id="PR:Q84X07"/>
<dbReference type="Proteomes" id="UP000006548">
    <property type="component" value="Chromosome 2"/>
</dbReference>
<dbReference type="ExpressionAtlas" id="Q84X07">
    <property type="expression patterns" value="differential"/>
</dbReference>
<dbReference type="GO" id="GO:0030246">
    <property type="term" value="F:carbohydrate binding"/>
    <property type="evidence" value="ECO:0007669"/>
    <property type="project" value="UniProtKB-KW"/>
</dbReference>
<dbReference type="CDD" id="cd09612">
    <property type="entry name" value="Jacalin"/>
    <property type="match status" value="1"/>
</dbReference>
<dbReference type="Gene3D" id="2.100.10.30">
    <property type="entry name" value="Jacalin-like lectin domain"/>
    <property type="match status" value="1"/>
</dbReference>
<dbReference type="InterPro" id="IPR001229">
    <property type="entry name" value="Jacalin-like_lectin_dom"/>
</dbReference>
<dbReference type="InterPro" id="IPR033734">
    <property type="entry name" value="Jacalin-like_lectin_dom_plant"/>
</dbReference>
<dbReference type="InterPro" id="IPR036404">
    <property type="entry name" value="Jacalin-like_lectin_dom_sf"/>
</dbReference>
<dbReference type="PANTHER" id="PTHR47293:SF70">
    <property type="entry name" value="JACALIN-RELATED LECTIN 24-RELATED"/>
    <property type="match status" value="1"/>
</dbReference>
<dbReference type="PANTHER" id="PTHR47293">
    <property type="entry name" value="JACALIN-RELATED LECTIN 3"/>
    <property type="match status" value="1"/>
</dbReference>
<dbReference type="Pfam" id="PF01419">
    <property type="entry name" value="Jacalin"/>
    <property type="match status" value="1"/>
</dbReference>
<dbReference type="SMART" id="SM00915">
    <property type="entry name" value="Jacalin"/>
    <property type="match status" value="1"/>
</dbReference>
<dbReference type="SUPFAM" id="SSF51101">
    <property type="entry name" value="Mannose-binding lectins"/>
    <property type="match status" value="1"/>
</dbReference>
<dbReference type="PROSITE" id="PS51752">
    <property type="entry name" value="JACALIN_LECTIN"/>
    <property type="match status" value="1"/>
</dbReference>
<gene>
    <name type="primary">JAL24</name>
    <name type="ordered locus">At2g43730</name>
    <name type="ORF">F18O19.16</name>
</gene>